<accession>Q9KS00</accession>
<proteinExistence type="inferred from homology"/>
<comment type="function">
    <text evidence="1">Necessary for the introduction of cis unsaturation into fatty acids. Catalyzes the dehydration of (3R)-3-hydroxydecanoyl-ACP to E-(2)-decenoyl-ACP and then its isomerization to Z-(3)-decenoyl-ACP. Can catalyze the dehydratase reaction for beta-hydroxyacyl-ACPs with saturated chain lengths up to 16:0, being most active on intermediate chain length (By similarity).</text>
</comment>
<comment type="catalytic activity">
    <reaction>
        <text>a (3R)-hydroxyacyl-[ACP] = a (2E)-enoyl-[ACP] + H2O</text>
        <dbReference type="Rhea" id="RHEA:13097"/>
        <dbReference type="Rhea" id="RHEA-COMP:9925"/>
        <dbReference type="Rhea" id="RHEA-COMP:9945"/>
        <dbReference type="ChEBI" id="CHEBI:15377"/>
        <dbReference type="ChEBI" id="CHEBI:78784"/>
        <dbReference type="ChEBI" id="CHEBI:78827"/>
        <dbReference type="EC" id="4.2.1.59"/>
    </reaction>
</comment>
<comment type="catalytic activity">
    <reaction>
        <text>(3R)-hydroxydecanoyl-[ACP] = (2E)-decenoyl-[ACP] + H2O</text>
        <dbReference type="Rhea" id="RHEA:41860"/>
        <dbReference type="Rhea" id="RHEA-COMP:9638"/>
        <dbReference type="Rhea" id="RHEA-COMP:9639"/>
        <dbReference type="ChEBI" id="CHEBI:15377"/>
        <dbReference type="ChEBI" id="CHEBI:78466"/>
        <dbReference type="ChEBI" id="CHEBI:78467"/>
    </reaction>
</comment>
<comment type="catalytic activity">
    <reaction>
        <text>(2E)-decenoyl-[ACP] = (3Z)-decenoyl-[ACP]</text>
        <dbReference type="Rhea" id="RHEA:23568"/>
        <dbReference type="Rhea" id="RHEA-COMP:9639"/>
        <dbReference type="Rhea" id="RHEA-COMP:9927"/>
        <dbReference type="ChEBI" id="CHEBI:78467"/>
        <dbReference type="ChEBI" id="CHEBI:78798"/>
        <dbReference type="EC" id="5.3.3.14"/>
    </reaction>
</comment>
<comment type="pathway">
    <text>Lipid metabolism; fatty acid biosynthesis.</text>
</comment>
<comment type="subunit">
    <text evidence="1">Homodimer.</text>
</comment>
<comment type="subcellular location">
    <subcellularLocation>
        <location evidence="1">Cytoplasm</location>
    </subcellularLocation>
</comment>
<comment type="similarity">
    <text evidence="2">Belongs to the thioester dehydratase family. FabA subfamily.</text>
</comment>
<feature type="chain" id="PRO_0000091617" description="3-hydroxydecanoyl-[acyl-carrier-protein] dehydratase">
    <location>
        <begin position="1"/>
        <end position="172"/>
    </location>
</feature>
<feature type="active site" evidence="1">
    <location>
        <position position="71"/>
    </location>
</feature>
<evidence type="ECO:0000250" key="1"/>
<evidence type="ECO:0000305" key="2"/>
<keyword id="KW-0963">Cytoplasm</keyword>
<keyword id="KW-0275">Fatty acid biosynthesis</keyword>
<keyword id="KW-0276">Fatty acid metabolism</keyword>
<keyword id="KW-0413">Isomerase</keyword>
<keyword id="KW-0444">Lipid biosynthesis</keyword>
<keyword id="KW-0443">Lipid metabolism</keyword>
<keyword id="KW-0456">Lyase</keyword>
<keyword id="KW-1185">Reference proteome</keyword>
<sequence length="172" mass="19042">MQNKRDSYNREDLLASSQGELFGEGYPQLPAPNMLMMDRITKMSETEGEFGKGLILAELDITPDLWFFDCHFPGDPVMPGCLGLDAMWQLVGFFLGWVGGKGKGRALGVGEVKFTGQILPTAKKVTYEINMKRVVNRKLVMGLADGRVLVDGKEIYVAKDLKVGLFQDTSAF</sequence>
<organism>
    <name type="scientific">Vibrio cholerae serotype O1 (strain ATCC 39315 / El Tor Inaba N16961)</name>
    <dbReference type="NCBI Taxonomy" id="243277"/>
    <lineage>
        <taxon>Bacteria</taxon>
        <taxon>Pseudomonadati</taxon>
        <taxon>Pseudomonadota</taxon>
        <taxon>Gammaproteobacteria</taxon>
        <taxon>Vibrionales</taxon>
        <taxon>Vibrionaceae</taxon>
        <taxon>Vibrio</taxon>
    </lineage>
</organism>
<name>FABA_VIBCH</name>
<gene>
    <name type="primary">fabA</name>
    <name type="ordered locus">VC_1483</name>
</gene>
<reference key="1">
    <citation type="journal article" date="2000" name="Nature">
        <title>DNA sequence of both chromosomes of the cholera pathogen Vibrio cholerae.</title>
        <authorList>
            <person name="Heidelberg J.F."/>
            <person name="Eisen J.A."/>
            <person name="Nelson W.C."/>
            <person name="Clayton R.A."/>
            <person name="Gwinn M.L."/>
            <person name="Dodson R.J."/>
            <person name="Haft D.H."/>
            <person name="Hickey E.K."/>
            <person name="Peterson J.D."/>
            <person name="Umayam L.A."/>
            <person name="Gill S.R."/>
            <person name="Nelson K.E."/>
            <person name="Read T.D."/>
            <person name="Tettelin H."/>
            <person name="Richardson D.L."/>
            <person name="Ermolaeva M.D."/>
            <person name="Vamathevan J.J."/>
            <person name="Bass S."/>
            <person name="Qin H."/>
            <person name="Dragoi I."/>
            <person name="Sellers P."/>
            <person name="McDonald L.A."/>
            <person name="Utterback T.R."/>
            <person name="Fleischmann R.D."/>
            <person name="Nierman W.C."/>
            <person name="White O."/>
            <person name="Salzberg S.L."/>
            <person name="Smith H.O."/>
            <person name="Colwell R.R."/>
            <person name="Mekalanos J.J."/>
            <person name="Venter J.C."/>
            <person name="Fraser C.M."/>
        </authorList>
    </citation>
    <scope>NUCLEOTIDE SEQUENCE [LARGE SCALE GENOMIC DNA]</scope>
    <source>
        <strain>ATCC 39315 / El Tor Inaba N16961</strain>
    </source>
</reference>
<protein>
    <recommendedName>
        <fullName>3-hydroxydecanoyl-[acyl-carrier-protein] dehydratase</fullName>
        <ecNumber>4.2.1.59</ecNumber>
    </recommendedName>
    <alternativeName>
        <fullName>3-hydroxyacyl-[acyl-carrier-protein] dehydratase FabA</fullName>
    </alternativeName>
    <alternativeName>
        <fullName>Beta-hydroxydecanoyl thioester dehydrase</fullName>
    </alternativeName>
    <alternativeName>
        <fullName>Trans-2-decenoyl-[acyl-carrier-protein] isomerase</fullName>
        <ecNumber>5.3.3.14</ecNumber>
    </alternativeName>
</protein>
<dbReference type="EC" id="4.2.1.59"/>
<dbReference type="EC" id="5.3.3.14"/>
<dbReference type="EMBL" id="AE003852">
    <property type="protein sequence ID" value="AAF94638.1"/>
    <property type="molecule type" value="Genomic_DNA"/>
</dbReference>
<dbReference type="PIR" id="D82194">
    <property type="entry name" value="D82194"/>
</dbReference>
<dbReference type="RefSeq" id="NP_231124.1">
    <property type="nucleotide sequence ID" value="NC_002505.1"/>
</dbReference>
<dbReference type="RefSeq" id="WP_001180252.1">
    <property type="nucleotide sequence ID" value="NZ_LT906614.1"/>
</dbReference>
<dbReference type="SMR" id="Q9KS00"/>
<dbReference type="STRING" id="243277.VC_1483"/>
<dbReference type="DNASU" id="2613989"/>
<dbReference type="EnsemblBacteria" id="AAF94638">
    <property type="protein sequence ID" value="AAF94638"/>
    <property type="gene ID" value="VC_1483"/>
</dbReference>
<dbReference type="GeneID" id="69719873"/>
<dbReference type="KEGG" id="vch:VC_1483"/>
<dbReference type="PATRIC" id="fig|243277.26.peg.1411"/>
<dbReference type="eggNOG" id="COG0764">
    <property type="taxonomic scope" value="Bacteria"/>
</dbReference>
<dbReference type="HOGENOM" id="CLU_097925_0_0_6"/>
<dbReference type="UniPathway" id="UPA00094"/>
<dbReference type="Proteomes" id="UP000000584">
    <property type="component" value="Chromosome 1"/>
</dbReference>
<dbReference type="GO" id="GO:0005737">
    <property type="term" value="C:cytoplasm"/>
    <property type="evidence" value="ECO:0007669"/>
    <property type="project" value="UniProtKB-SubCell"/>
</dbReference>
<dbReference type="GO" id="GO:0019171">
    <property type="term" value="F:(3R)-hydroxyacyl-[acyl-carrier-protein] dehydratase activity"/>
    <property type="evidence" value="ECO:0007669"/>
    <property type="project" value="UniProtKB-UniRule"/>
</dbReference>
<dbReference type="GO" id="GO:0034017">
    <property type="term" value="F:trans-2-decenoyl-acyl-carrier-protein isomerase activity"/>
    <property type="evidence" value="ECO:0007669"/>
    <property type="project" value="UniProtKB-UniRule"/>
</dbReference>
<dbReference type="GO" id="GO:0006636">
    <property type="term" value="P:unsaturated fatty acid biosynthetic process"/>
    <property type="evidence" value="ECO:0007669"/>
    <property type="project" value="UniProtKB-UniRule"/>
</dbReference>
<dbReference type="CDD" id="cd01287">
    <property type="entry name" value="FabA"/>
    <property type="match status" value="1"/>
</dbReference>
<dbReference type="FunFam" id="3.10.129.10:FF:000003">
    <property type="entry name" value="3-hydroxydecanoyl-[acyl-carrier-protein] dehydratase"/>
    <property type="match status" value="1"/>
</dbReference>
<dbReference type="Gene3D" id="3.10.129.10">
    <property type="entry name" value="Hotdog Thioesterase"/>
    <property type="match status" value="1"/>
</dbReference>
<dbReference type="HAMAP" id="MF_00405">
    <property type="entry name" value="FabA"/>
    <property type="match status" value="1"/>
</dbReference>
<dbReference type="InterPro" id="IPR010083">
    <property type="entry name" value="FabA"/>
</dbReference>
<dbReference type="InterPro" id="IPR013114">
    <property type="entry name" value="FabA_FabZ"/>
</dbReference>
<dbReference type="InterPro" id="IPR029069">
    <property type="entry name" value="HotDog_dom_sf"/>
</dbReference>
<dbReference type="NCBIfam" id="TIGR01749">
    <property type="entry name" value="fabA"/>
    <property type="match status" value="1"/>
</dbReference>
<dbReference type="NCBIfam" id="NF003509">
    <property type="entry name" value="PRK05174.1"/>
    <property type="match status" value="1"/>
</dbReference>
<dbReference type="PANTHER" id="PTHR30272">
    <property type="entry name" value="3-HYDROXYACYL-[ACYL-CARRIER-PROTEIN] DEHYDRATASE"/>
    <property type="match status" value="1"/>
</dbReference>
<dbReference type="PANTHER" id="PTHR30272:SF8">
    <property type="entry name" value="3-HYDROXYDECANOYL-[ACYL-CARRIER-PROTEIN] DEHYDRATASE"/>
    <property type="match status" value="1"/>
</dbReference>
<dbReference type="Pfam" id="PF07977">
    <property type="entry name" value="FabA"/>
    <property type="match status" value="1"/>
</dbReference>
<dbReference type="SUPFAM" id="SSF54637">
    <property type="entry name" value="Thioesterase/thiol ester dehydrase-isomerase"/>
    <property type="match status" value="1"/>
</dbReference>